<organism>
    <name type="scientific">Arabidopsis thaliana</name>
    <name type="common">Mouse-ear cress</name>
    <dbReference type="NCBI Taxonomy" id="3702"/>
    <lineage>
        <taxon>Eukaryota</taxon>
        <taxon>Viridiplantae</taxon>
        <taxon>Streptophyta</taxon>
        <taxon>Embryophyta</taxon>
        <taxon>Tracheophyta</taxon>
        <taxon>Spermatophyta</taxon>
        <taxon>Magnoliopsida</taxon>
        <taxon>eudicotyledons</taxon>
        <taxon>Gunneridae</taxon>
        <taxon>Pentapetalae</taxon>
        <taxon>rosids</taxon>
        <taxon>malvids</taxon>
        <taxon>Brassicales</taxon>
        <taxon>Brassicaceae</taxon>
        <taxon>Camelineae</taxon>
        <taxon>Arabidopsis</taxon>
    </lineage>
</organism>
<protein>
    <recommendedName>
        <fullName>Polyadenylate-binding protein RBP47C'</fullName>
        <shortName>Poly(A)-binding protein RBP47C'</shortName>
    </recommendedName>
    <alternativeName>
        <fullName>RNA-binding protein 47C'</fullName>
        <shortName>AtRBP47C prime</shortName>
        <shortName>AtRBP47C'</shortName>
    </alternativeName>
</protein>
<accession>Q9SX80</accession>
<sequence>MADVKVQSESESSDSHPLVDYQSLPPYPPPHPPVEVEENQPKTSPTPPPPHWMRYPPVLMPQMMYAPPPPMPFSPYHQYPNHHHFHHQSRGNKHQNAFNGENKTIWVGDLQNWMDEAYLNSAFTSAEEREIVSLKVIRNKHNGSSEGYGFVEFESHDVADKVLQEFNGAPMPNTDQPFRLNWASFSTGEKRLENNGPDLSIFVGDLAPDVSDALLHETFSEKYPSVKAAKVVLDANTGRSKGYGFVRFGDENERTKAMTEMNGVKCSSRAMRIGPATPRKTNGYQQQGGYMPSGAFTRSEGDTINTTIFVGGLDSSVTDEDLKQPFSEFGEIVSVKIPVGKGCGFVQFVNRPNAEEALEKLNGTVIGKQTVRLSWGRNPANKQPRDKYGNQWVDPYYGGQFYNGYGYMVPQPDPRMYPAAPYYPMYGGHQQQVS</sequence>
<feature type="chain" id="PRO_0000415770" description="Polyadenylate-binding protein RBP47C'">
    <location>
        <begin position="1"/>
        <end position="434"/>
    </location>
</feature>
<feature type="domain" description="RRM 1" evidence="2">
    <location>
        <begin position="103"/>
        <end position="185"/>
    </location>
</feature>
<feature type="domain" description="RRM 2" evidence="2">
    <location>
        <begin position="199"/>
        <end position="278"/>
    </location>
</feature>
<feature type="domain" description="RRM 3" evidence="2">
    <location>
        <begin position="306"/>
        <end position="378"/>
    </location>
</feature>
<feature type="region of interest" description="Disordered" evidence="3">
    <location>
        <begin position="1"/>
        <end position="50"/>
    </location>
</feature>
<evidence type="ECO:0000250" key="1"/>
<evidence type="ECO:0000255" key="2">
    <source>
        <dbReference type="PROSITE-ProRule" id="PRU00176"/>
    </source>
</evidence>
<evidence type="ECO:0000256" key="3">
    <source>
        <dbReference type="SAM" id="MobiDB-lite"/>
    </source>
</evidence>
<evidence type="ECO:0000305" key="4"/>
<comment type="function">
    <text evidence="1">Heterogeneous nuclear ribonucleoprotein (hnRNP)-protein binding the poly(A) tail of mRNA and probably involved in some steps of pre-mRNA maturation.</text>
</comment>
<comment type="subunit">
    <text evidence="1">Interacts with the poly(A) tail of mRNA in nucleus.</text>
</comment>
<comment type="subcellular location">
    <subcellularLocation>
        <location evidence="1">Nucleus</location>
    </subcellularLocation>
    <subcellularLocation>
        <location evidence="1">Cytoplasmic granule</location>
    </subcellularLocation>
</comment>
<comment type="similarity">
    <text evidence="4">Belongs to the polyadenylate-binding RBP47 family.</text>
</comment>
<proteinExistence type="evidence at transcript level"/>
<gene>
    <name type="primary">RBP47C'</name>
    <name type="ordered locus">At1g47500</name>
    <name type="ORF">F16N3.23</name>
</gene>
<keyword id="KW-0507">mRNA processing</keyword>
<keyword id="KW-0539">Nucleus</keyword>
<keyword id="KW-1185">Reference proteome</keyword>
<keyword id="KW-0677">Repeat</keyword>
<keyword id="KW-0694">RNA-binding</keyword>
<name>R47CP_ARATH</name>
<reference key="1">
    <citation type="journal article" date="2000" name="Nature">
        <title>Sequence and analysis of chromosome 1 of the plant Arabidopsis thaliana.</title>
        <authorList>
            <person name="Theologis A."/>
            <person name="Ecker J.R."/>
            <person name="Palm C.J."/>
            <person name="Federspiel N.A."/>
            <person name="Kaul S."/>
            <person name="White O."/>
            <person name="Alonso J."/>
            <person name="Altafi H."/>
            <person name="Araujo R."/>
            <person name="Bowman C.L."/>
            <person name="Brooks S.Y."/>
            <person name="Buehler E."/>
            <person name="Chan A."/>
            <person name="Chao Q."/>
            <person name="Chen H."/>
            <person name="Cheuk R.F."/>
            <person name="Chin C.W."/>
            <person name="Chung M.K."/>
            <person name="Conn L."/>
            <person name="Conway A.B."/>
            <person name="Conway A.R."/>
            <person name="Creasy T.H."/>
            <person name="Dewar K."/>
            <person name="Dunn P."/>
            <person name="Etgu P."/>
            <person name="Feldblyum T.V."/>
            <person name="Feng J.-D."/>
            <person name="Fong B."/>
            <person name="Fujii C.Y."/>
            <person name="Gill J.E."/>
            <person name="Goldsmith A.D."/>
            <person name="Haas B."/>
            <person name="Hansen N.F."/>
            <person name="Hughes B."/>
            <person name="Huizar L."/>
            <person name="Hunter J.L."/>
            <person name="Jenkins J."/>
            <person name="Johnson-Hopson C."/>
            <person name="Khan S."/>
            <person name="Khaykin E."/>
            <person name="Kim C.J."/>
            <person name="Koo H.L."/>
            <person name="Kremenetskaia I."/>
            <person name="Kurtz D.B."/>
            <person name="Kwan A."/>
            <person name="Lam B."/>
            <person name="Langin-Hooper S."/>
            <person name="Lee A."/>
            <person name="Lee J.M."/>
            <person name="Lenz C.A."/>
            <person name="Li J.H."/>
            <person name="Li Y.-P."/>
            <person name="Lin X."/>
            <person name="Liu S.X."/>
            <person name="Liu Z.A."/>
            <person name="Luros J.S."/>
            <person name="Maiti R."/>
            <person name="Marziali A."/>
            <person name="Militscher J."/>
            <person name="Miranda M."/>
            <person name="Nguyen M."/>
            <person name="Nierman W.C."/>
            <person name="Osborne B.I."/>
            <person name="Pai G."/>
            <person name="Peterson J."/>
            <person name="Pham P.K."/>
            <person name="Rizzo M."/>
            <person name="Rooney T."/>
            <person name="Rowley D."/>
            <person name="Sakano H."/>
            <person name="Salzberg S.L."/>
            <person name="Schwartz J.R."/>
            <person name="Shinn P."/>
            <person name="Southwick A.M."/>
            <person name="Sun H."/>
            <person name="Tallon L.J."/>
            <person name="Tambunga G."/>
            <person name="Toriumi M.J."/>
            <person name="Town C.D."/>
            <person name="Utterback T."/>
            <person name="Van Aken S."/>
            <person name="Vaysberg M."/>
            <person name="Vysotskaia V.S."/>
            <person name="Walker M."/>
            <person name="Wu D."/>
            <person name="Yu G."/>
            <person name="Fraser C.M."/>
            <person name="Venter J.C."/>
            <person name="Davis R.W."/>
        </authorList>
    </citation>
    <scope>NUCLEOTIDE SEQUENCE [LARGE SCALE GENOMIC DNA]</scope>
    <source>
        <strain>cv. Columbia</strain>
    </source>
</reference>
<reference key="2">
    <citation type="journal article" date="2017" name="Plant J.">
        <title>Araport11: a complete reannotation of the Arabidopsis thaliana reference genome.</title>
        <authorList>
            <person name="Cheng C.Y."/>
            <person name="Krishnakumar V."/>
            <person name="Chan A.P."/>
            <person name="Thibaud-Nissen F."/>
            <person name="Schobel S."/>
            <person name="Town C.D."/>
        </authorList>
    </citation>
    <scope>GENOME REANNOTATION</scope>
    <source>
        <strain>cv. Columbia</strain>
    </source>
</reference>
<reference key="3">
    <citation type="submission" date="2006-07" db="EMBL/GenBank/DDBJ databases">
        <title>Large-scale analysis of RIKEN Arabidopsis full-length (RAFL) cDNAs.</title>
        <authorList>
            <person name="Totoki Y."/>
            <person name="Seki M."/>
            <person name="Ishida J."/>
            <person name="Nakajima M."/>
            <person name="Enju A."/>
            <person name="Kamiya A."/>
            <person name="Narusaka M."/>
            <person name="Shin-i T."/>
            <person name="Nakagawa M."/>
            <person name="Sakamoto N."/>
            <person name="Oishi K."/>
            <person name="Kohara Y."/>
            <person name="Kobayashi M."/>
            <person name="Toyoda A."/>
            <person name="Sakaki Y."/>
            <person name="Sakurai T."/>
            <person name="Iida K."/>
            <person name="Akiyama K."/>
            <person name="Satou M."/>
            <person name="Toyoda T."/>
            <person name="Konagaya A."/>
            <person name="Carninci P."/>
            <person name="Kawai J."/>
            <person name="Hayashizaki Y."/>
            <person name="Shinozaki K."/>
        </authorList>
    </citation>
    <scope>NUCLEOTIDE SEQUENCE [LARGE SCALE MRNA]</scope>
    <source>
        <strain>cv. Columbia</strain>
    </source>
</reference>
<reference key="4">
    <citation type="submission" date="2007-01" db="EMBL/GenBank/DDBJ databases">
        <title>Arabidopsis ORF clones.</title>
        <authorList>
            <person name="Bautista V.R."/>
            <person name="Kim C.J."/>
            <person name="Chen H."/>
            <person name="Wu S.Y."/>
            <person name="De Los Reyes C."/>
            <person name="Ecker J.R."/>
        </authorList>
    </citation>
    <scope>NUCLEOTIDE SEQUENCE [LARGE SCALE MRNA]</scope>
    <source>
        <strain>cv. Columbia</strain>
    </source>
</reference>
<reference key="5">
    <citation type="journal article" date="2000" name="RNA">
        <title>RBP45 and RBP47, two oligouridylate-specific hnRNP-like proteins interacting with poly(A)+ RNA in nuclei of plant cells.</title>
        <authorList>
            <person name="Lorkovic Z.J."/>
            <person name="Wieczorek Kirk D.A."/>
            <person name="Klahre U."/>
            <person name="Hemmings-Mieszczak M."/>
            <person name="Filipowicz W."/>
        </authorList>
    </citation>
    <scope>GENE FAMILY</scope>
    <scope>NOMENCLATURE</scope>
</reference>
<reference key="6">
    <citation type="journal article" date="2011" name="Mol. Cells">
        <title>Phylogenetic and expression analysis of RNA-binding proteins with triple RNA recognition motifs in plants.</title>
        <authorList>
            <person name="Peal L."/>
            <person name="Jambunathan N."/>
            <person name="Mahalingam R."/>
        </authorList>
    </citation>
    <scope>GENE FAMILY</scope>
    <source>
        <strain>cv. Columbia</strain>
        <strain>cv. Wassilewskija</strain>
    </source>
</reference>
<dbReference type="EMBL" id="AC007519">
    <property type="protein sequence ID" value="AAD46037.1"/>
    <property type="molecule type" value="Genomic_DNA"/>
</dbReference>
<dbReference type="EMBL" id="CP002684">
    <property type="protein sequence ID" value="AEE32178.1"/>
    <property type="molecule type" value="Genomic_DNA"/>
</dbReference>
<dbReference type="EMBL" id="AK227406">
    <property type="protein sequence ID" value="BAE99410.1"/>
    <property type="molecule type" value="mRNA"/>
</dbReference>
<dbReference type="EMBL" id="BT030029">
    <property type="protein sequence ID" value="ABN04767.1"/>
    <property type="molecule type" value="mRNA"/>
</dbReference>
<dbReference type="PIR" id="C96515">
    <property type="entry name" value="C96515"/>
</dbReference>
<dbReference type="RefSeq" id="NP_175181.1">
    <property type="nucleotide sequence ID" value="NM_103643.3"/>
</dbReference>
<dbReference type="SMR" id="Q9SX80"/>
<dbReference type="FunCoup" id="Q9SX80">
    <property type="interactions" value="231"/>
</dbReference>
<dbReference type="STRING" id="3702.Q9SX80"/>
<dbReference type="GlyGen" id="Q9SX80">
    <property type="glycosylation" value="2 sites, 1 O-linked glycan (1 site)"/>
</dbReference>
<dbReference type="iPTMnet" id="Q9SX80"/>
<dbReference type="PaxDb" id="3702-AT1G47500.1"/>
<dbReference type="ProteomicsDB" id="224873"/>
<dbReference type="EnsemblPlants" id="AT1G47500.1">
    <property type="protein sequence ID" value="AT1G47500.1"/>
    <property type="gene ID" value="AT1G47500"/>
</dbReference>
<dbReference type="GeneID" id="841159"/>
<dbReference type="Gramene" id="AT1G47500.1">
    <property type="protein sequence ID" value="AT1G47500.1"/>
    <property type="gene ID" value="AT1G47500"/>
</dbReference>
<dbReference type="KEGG" id="ath:AT1G47500"/>
<dbReference type="Araport" id="AT1G47500"/>
<dbReference type="TAIR" id="AT1G47500">
    <property type="gene designation" value="RBP47C'"/>
</dbReference>
<dbReference type="eggNOG" id="KOG0118">
    <property type="taxonomic scope" value="Eukaryota"/>
</dbReference>
<dbReference type="HOGENOM" id="CLU_016304_2_1_1"/>
<dbReference type="InParanoid" id="Q9SX80"/>
<dbReference type="OMA" id="VMQHQMA"/>
<dbReference type="PhylomeDB" id="Q9SX80"/>
<dbReference type="PRO" id="PR:Q9SX80"/>
<dbReference type="Proteomes" id="UP000006548">
    <property type="component" value="Chromosome 1"/>
</dbReference>
<dbReference type="ExpressionAtlas" id="Q9SX80">
    <property type="expression patterns" value="baseline and differential"/>
</dbReference>
<dbReference type="GO" id="GO:0010494">
    <property type="term" value="C:cytoplasmic stress granule"/>
    <property type="evidence" value="ECO:0000250"/>
    <property type="project" value="UniProtKB"/>
</dbReference>
<dbReference type="GO" id="GO:0005634">
    <property type="term" value="C:nucleus"/>
    <property type="evidence" value="ECO:0000250"/>
    <property type="project" value="UniProtKB"/>
</dbReference>
<dbReference type="GO" id="GO:0003729">
    <property type="term" value="F:mRNA binding"/>
    <property type="evidence" value="ECO:0000314"/>
    <property type="project" value="TAIR"/>
</dbReference>
<dbReference type="GO" id="GO:0008143">
    <property type="term" value="F:poly(A) binding"/>
    <property type="evidence" value="ECO:0000250"/>
    <property type="project" value="UniProtKB"/>
</dbReference>
<dbReference type="GO" id="GO:0034605">
    <property type="term" value="P:cellular response to heat"/>
    <property type="evidence" value="ECO:0000250"/>
    <property type="project" value="UniProtKB"/>
</dbReference>
<dbReference type="GO" id="GO:0006397">
    <property type="term" value="P:mRNA processing"/>
    <property type="evidence" value="ECO:0007669"/>
    <property type="project" value="UniProtKB-KW"/>
</dbReference>
<dbReference type="CDD" id="cd12344">
    <property type="entry name" value="RRM1_SECp43_like"/>
    <property type="match status" value="1"/>
</dbReference>
<dbReference type="CDD" id="cd12345">
    <property type="entry name" value="RRM2_SECp43_like"/>
    <property type="match status" value="1"/>
</dbReference>
<dbReference type="CDD" id="cd12346">
    <property type="entry name" value="RRM3_NGR1_NAM8_like"/>
    <property type="match status" value="1"/>
</dbReference>
<dbReference type="FunFam" id="3.30.70.330:FF:000395">
    <property type="entry name" value="Polyadenylate-binding protein RBP47"/>
    <property type="match status" value="1"/>
</dbReference>
<dbReference type="FunFam" id="3.30.70.330:FF:000103">
    <property type="entry name" value="Polyadenylate-binding protein RBP47B"/>
    <property type="match status" value="1"/>
</dbReference>
<dbReference type="FunFam" id="3.30.70.330:FF:000144">
    <property type="entry name" value="Polyadenylate-binding protein RBP47B"/>
    <property type="match status" value="1"/>
</dbReference>
<dbReference type="Gene3D" id="3.30.70.330">
    <property type="match status" value="3"/>
</dbReference>
<dbReference type="InterPro" id="IPR012677">
    <property type="entry name" value="Nucleotide-bd_a/b_plait_sf"/>
</dbReference>
<dbReference type="InterPro" id="IPR035979">
    <property type="entry name" value="RBD_domain_sf"/>
</dbReference>
<dbReference type="InterPro" id="IPR050825">
    <property type="entry name" value="RBM42_RBP45_47-like"/>
</dbReference>
<dbReference type="InterPro" id="IPR000504">
    <property type="entry name" value="RRM_dom"/>
</dbReference>
<dbReference type="PANTHER" id="PTHR47640:SF16">
    <property type="entry name" value="POLYADENYLATE-BINDING PROTEIN RBP47C-RELATED"/>
    <property type="match status" value="1"/>
</dbReference>
<dbReference type="PANTHER" id="PTHR47640">
    <property type="entry name" value="TRNA SELENOCYSTEINE 1-ASSOCIATED PROTEIN 1-RELATED-RELATED"/>
    <property type="match status" value="1"/>
</dbReference>
<dbReference type="Pfam" id="PF00076">
    <property type="entry name" value="RRM_1"/>
    <property type="match status" value="3"/>
</dbReference>
<dbReference type="SMART" id="SM00360">
    <property type="entry name" value="RRM"/>
    <property type="match status" value="3"/>
</dbReference>
<dbReference type="SUPFAM" id="SSF54928">
    <property type="entry name" value="RNA-binding domain, RBD"/>
    <property type="match status" value="2"/>
</dbReference>
<dbReference type="PROSITE" id="PS50102">
    <property type="entry name" value="RRM"/>
    <property type="match status" value="3"/>
</dbReference>